<evidence type="ECO:0000255" key="1">
    <source>
        <dbReference type="HAMAP-Rule" id="MF_01356"/>
    </source>
</evidence>
<dbReference type="EC" id="7.1.1.-" evidence="1"/>
<dbReference type="EMBL" id="AP009374">
    <property type="protein sequence ID" value="BAF50465.1"/>
    <property type="molecule type" value="Genomic_DNA"/>
</dbReference>
<dbReference type="RefSeq" id="YP_001123641.1">
    <property type="nucleotide sequence ID" value="NC_009273.1"/>
</dbReference>
<dbReference type="SMR" id="A4QLB0"/>
<dbReference type="GeneID" id="4961980"/>
<dbReference type="GO" id="GO:0009535">
    <property type="term" value="C:chloroplast thylakoid membrane"/>
    <property type="evidence" value="ECO:0007669"/>
    <property type="project" value="UniProtKB-SubCell"/>
</dbReference>
<dbReference type="GO" id="GO:0045271">
    <property type="term" value="C:respiratory chain complex I"/>
    <property type="evidence" value="ECO:0007669"/>
    <property type="project" value="TreeGrafter"/>
</dbReference>
<dbReference type="GO" id="GO:0051539">
    <property type="term" value="F:4 iron, 4 sulfur cluster binding"/>
    <property type="evidence" value="ECO:0007669"/>
    <property type="project" value="UniProtKB-KW"/>
</dbReference>
<dbReference type="GO" id="GO:0005506">
    <property type="term" value="F:iron ion binding"/>
    <property type="evidence" value="ECO:0007669"/>
    <property type="project" value="UniProtKB-UniRule"/>
</dbReference>
<dbReference type="GO" id="GO:0008137">
    <property type="term" value="F:NADH dehydrogenase (ubiquinone) activity"/>
    <property type="evidence" value="ECO:0007669"/>
    <property type="project" value="InterPro"/>
</dbReference>
<dbReference type="GO" id="GO:0048038">
    <property type="term" value="F:quinone binding"/>
    <property type="evidence" value="ECO:0007669"/>
    <property type="project" value="UniProtKB-KW"/>
</dbReference>
<dbReference type="GO" id="GO:0009060">
    <property type="term" value="P:aerobic respiration"/>
    <property type="evidence" value="ECO:0007669"/>
    <property type="project" value="TreeGrafter"/>
</dbReference>
<dbReference type="GO" id="GO:0015990">
    <property type="term" value="P:electron transport coupled proton transport"/>
    <property type="evidence" value="ECO:0007669"/>
    <property type="project" value="TreeGrafter"/>
</dbReference>
<dbReference type="GO" id="GO:0019684">
    <property type="term" value="P:photosynthesis, light reaction"/>
    <property type="evidence" value="ECO:0007669"/>
    <property type="project" value="UniProtKB-UniRule"/>
</dbReference>
<dbReference type="FunFam" id="3.40.50.12280:FF:000003">
    <property type="entry name" value="NAD(P)H-quinone oxidoreductase subunit K, chloroplastic"/>
    <property type="match status" value="1"/>
</dbReference>
<dbReference type="Gene3D" id="3.40.50.12280">
    <property type="match status" value="1"/>
</dbReference>
<dbReference type="HAMAP" id="MF_01356">
    <property type="entry name" value="NDH1_NuoB"/>
    <property type="match status" value="1"/>
</dbReference>
<dbReference type="InterPro" id="IPR006137">
    <property type="entry name" value="NADH_UbQ_OxRdtase-like_20kDa"/>
</dbReference>
<dbReference type="InterPro" id="IPR006138">
    <property type="entry name" value="NADH_UQ_OxRdtase_20Kd_su"/>
</dbReference>
<dbReference type="NCBIfam" id="TIGR01957">
    <property type="entry name" value="nuoB_fam"/>
    <property type="match status" value="1"/>
</dbReference>
<dbReference type="NCBIfam" id="NF005012">
    <property type="entry name" value="PRK06411.1"/>
    <property type="match status" value="1"/>
</dbReference>
<dbReference type="PANTHER" id="PTHR11995">
    <property type="entry name" value="NADH DEHYDROGENASE"/>
    <property type="match status" value="1"/>
</dbReference>
<dbReference type="PANTHER" id="PTHR11995:SF14">
    <property type="entry name" value="NADH DEHYDROGENASE [UBIQUINONE] IRON-SULFUR PROTEIN 7, MITOCHONDRIAL"/>
    <property type="match status" value="1"/>
</dbReference>
<dbReference type="Pfam" id="PF01058">
    <property type="entry name" value="Oxidored_q6"/>
    <property type="match status" value="1"/>
</dbReference>
<dbReference type="SUPFAM" id="SSF56770">
    <property type="entry name" value="HydA/Nqo6-like"/>
    <property type="match status" value="1"/>
</dbReference>
<dbReference type="PROSITE" id="PS01150">
    <property type="entry name" value="COMPLEX1_20K"/>
    <property type="match status" value="1"/>
</dbReference>
<geneLocation type="chloroplast"/>
<keyword id="KW-0004">4Fe-4S</keyword>
<keyword id="KW-0150">Chloroplast</keyword>
<keyword id="KW-0408">Iron</keyword>
<keyword id="KW-0411">Iron-sulfur</keyword>
<keyword id="KW-0472">Membrane</keyword>
<keyword id="KW-0479">Metal-binding</keyword>
<keyword id="KW-0520">NAD</keyword>
<keyword id="KW-0521">NADP</keyword>
<keyword id="KW-0934">Plastid</keyword>
<keyword id="KW-0618">Plastoquinone</keyword>
<keyword id="KW-0874">Quinone</keyword>
<keyword id="KW-0793">Thylakoid</keyword>
<keyword id="KW-1278">Translocase</keyword>
<keyword id="KW-0813">Transport</keyword>
<gene>
    <name evidence="1" type="primary">ndhK</name>
</gene>
<protein>
    <recommendedName>
        <fullName evidence="1">NAD(P)H-quinone oxidoreductase subunit K, chloroplastic</fullName>
        <ecNumber evidence="1">7.1.1.-</ecNumber>
    </recommendedName>
    <alternativeName>
        <fullName evidence="1">NAD(P)H dehydrogenase subunit K</fullName>
    </alternativeName>
    <alternativeName>
        <fullName evidence="1">NADH-plastoquinone oxidoreductase subunit K</fullName>
    </alternativeName>
</protein>
<proteinExistence type="inferred from homology"/>
<name>NDHK_LEPVR</name>
<reference key="1">
    <citation type="submission" date="2007-03" db="EMBL/GenBank/DDBJ databases">
        <title>Sequencing analysis of Lepidium virginicum JO26 chloroplast DNA.</title>
        <authorList>
            <person name="Hosouchi T."/>
            <person name="Tsuruoka H."/>
            <person name="Kotani H."/>
        </authorList>
    </citation>
    <scope>NUCLEOTIDE SEQUENCE [LARGE SCALE GENOMIC DNA]</scope>
</reference>
<comment type="function">
    <text evidence="1">NDH shuttles electrons from NAD(P)H:plastoquinone, via FMN and iron-sulfur (Fe-S) centers, to quinones in the photosynthetic chain and possibly in a chloroplast respiratory chain. The immediate electron acceptor for the enzyme in this species is believed to be plastoquinone. Couples the redox reaction to proton translocation, and thus conserves the redox energy in a proton gradient.</text>
</comment>
<comment type="catalytic activity">
    <reaction evidence="1">
        <text>a plastoquinone + NADH + (n+1) H(+)(in) = a plastoquinol + NAD(+) + n H(+)(out)</text>
        <dbReference type="Rhea" id="RHEA:42608"/>
        <dbReference type="Rhea" id="RHEA-COMP:9561"/>
        <dbReference type="Rhea" id="RHEA-COMP:9562"/>
        <dbReference type="ChEBI" id="CHEBI:15378"/>
        <dbReference type="ChEBI" id="CHEBI:17757"/>
        <dbReference type="ChEBI" id="CHEBI:57540"/>
        <dbReference type="ChEBI" id="CHEBI:57945"/>
        <dbReference type="ChEBI" id="CHEBI:62192"/>
    </reaction>
</comment>
<comment type="catalytic activity">
    <reaction evidence="1">
        <text>a plastoquinone + NADPH + (n+1) H(+)(in) = a plastoquinol + NADP(+) + n H(+)(out)</text>
        <dbReference type="Rhea" id="RHEA:42612"/>
        <dbReference type="Rhea" id="RHEA-COMP:9561"/>
        <dbReference type="Rhea" id="RHEA-COMP:9562"/>
        <dbReference type="ChEBI" id="CHEBI:15378"/>
        <dbReference type="ChEBI" id="CHEBI:17757"/>
        <dbReference type="ChEBI" id="CHEBI:57783"/>
        <dbReference type="ChEBI" id="CHEBI:58349"/>
        <dbReference type="ChEBI" id="CHEBI:62192"/>
    </reaction>
</comment>
<comment type="cofactor">
    <cofactor evidence="1">
        <name>[4Fe-4S] cluster</name>
        <dbReference type="ChEBI" id="CHEBI:49883"/>
    </cofactor>
    <text evidence="1">Binds 1 [4Fe-4S] cluster.</text>
</comment>
<comment type="subunit">
    <text evidence="1">NDH is composed of at least 16 different subunits, 5 of which are encoded in the nucleus.</text>
</comment>
<comment type="subcellular location">
    <subcellularLocation>
        <location evidence="1">Plastid</location>
        <location evidence="1">Chloroplast thylakoid membrane</location>
        <topology evidence="1">Peripheral membrane protein</topology>
        <orientation evidence="1">Stromal side</orientation>
    </subcellularLocation>
</comment>
<comment type="similarity">
    <text evidence="1">Belongs to the complex I 20 kDa subunit family.</text>
</comment>
<organism>
    <name type="scientific">Lepidium virginicum</name>
    <name type="common">Virginia pepperweed</name>
    <dbReference type="NCBI Taxonomy" id="59292"/>
    <lineage>
        <taxon>Eukaryota</taxon>
        <taxon>Viridiplantae</taxon>
        <taxon>Streptophyta</taxon>
        <taxon>Embryophyta</taxon>
        <taxon>Tracheophyta</taxon>
        <taxon>Spermatophyta</taxon>
        <taxon>Magnoliopsida</taxon>
        <taxon>eudicotyledons</taxon>
        <taxon>Gunneridae</taxon>
        <taxon>Pentapetalae</taxon>
        <taxon>rosids</taxon>
        <taxon>malvids</taxon>
        <taxon>Brassicales</taxon>
        <taxon>Brassicaceae</taxon>
        <taxon>Lepidieae</taxon>
        <taxon>Lepidium</taxon>
    </lineage>
</organism>
<feature type="chain" id="PRO_0000358555" description="NAD(P)H-quinone oxidoreductase subunit K, chloroplastic">
    <location>
        <begin position="1"/>
        <end position="225"/>
    </location>
</feature>
<feature type="binding site" evidence="1">
    <location>
        <position position="43"/>
    </location>
    <ligand>
        <name>[4Fe-4S] cluster</name>
        <dbReference type="ChEBI" id="CHEBI:49883"/>
    </ligand>
</feature>
<feature type="binding site" evidence="1">
    <location>
        <position position="44"/>
    </location>
    <ligand>
        <name>[4Fe-4S] cluster</name>
        <dbReference type="ChEBI" id="CHEBI:49883"/>
    </ligand>
</feature>
<feature type="binding site" evidence="1">
    <location>
        <position position="108"/>
    </location>
    <ligand>
        <name>[4Fe-4S] cluster</name>
        <dbReference type="ChEBI" id="CHEBI:49883"/>
    </ligand>
</feature>
<feature type="binding site" evidence="1">
    <location>
        <position position="139"/>
    </location>
    <ligand>
        <name>[4Fe-4S] cluster</name>
        <dbReference type="ChEBI" id="CHEBI:49883"/>
    </ligand>
</feature>
<sequence>MNSIKFPVLDRTTTNSVISTTLNDLSNWSRLSSLWPLLYGTSCCFIEFASLIGSRFDFDRYGLVPRSSPRQADLILTAGTVTMKMAPSLVRLYEQMPEPKYVIAMGACTITGGMFSTDSYSTVRGVDKLIPVDVYLPGCPPKPEAVIDAITKLRKKIAREIYKDRIRPQQGNRCFTTNHKFFVVRSPHTGNYDQELLYPPSSTSEISTETFFKYKSPVSSHELVN</sequence>
<accession>A4QLB0</accession>